<keyword id="KW-0963">Cytoplasm</keyword>
<keyword id="KW-0448">Lipopolysaccharide biosynthesis</keyword>
<keyword id="KW-0808">Transferase</keyword>
<organism>
    <name type="scientific">Escherichia coli O9:H4 (strain HS)</name>
    <dbReference type="NCBI Taxonomy" id="331112"/>
    <lineage>
        <taxon>Bacteria</taxon>
        <taxon>Pseudomonadati</taxon>
        <taxon>Pseudomonadota</taxon>
        <taxon>Gammaproteobacteria</taxon>
        <taxon>Enterobacterales</taxon>
        <taxon>Enterobacteriaceae</taxon>
        <taxon>Escherichia</taxon>
    </lineage>
</organism>
<gene>
    <name evidence="1" type="primary">kdsA</name>
    <name type="ordered locus">EcHS_A1320</name>
</gene>
<proteinExistence type="inferred from homology"/>
<sequence length="284" mass="30833">MKQKVVSIGDINVANDLPFVLFGGMNVLESRDLAMRICEHYVTVTQKLGIPYVFKASFDKANRSSIHSYRGPGLEEGMKIFQELKQTFGVKIITDVHEPSQAQPVADVVDVIQLPAFLARQTDLVEAMAKTGAVINVKKPQFVSPGQMGNIVDKFKEGGNEKVILCDRGANFGYDNLVVDMLGFSIMKKVSGNSPVIFDVTHALQCRDPFGAASGGRRAQVAELARAGMAVGLAGLFIEAHPDPEHAKCDGPSALPLAKLEPFLKQMKAIDDLVKGFEELDTSK</sequence>
<reference key="1">
    <citation type="journal article" date="2008" name="J. Bacteriol.">
        <title>The pangenome structure of Escherichia coli: comparative genomic analysis of E. coli commensal and pathogenic isolates.</title>
        <authorList>
            <person name="Rasko D.A."/>
            <person name="Rosovitz M.J."/>
            <person name="Myers G.S.A."/>
            <person name="Mongodin E.F."/>
            <person name="Fricke W.F."/>
            <person name="Gajer P."/>
            <person name="Crabtree J."/>
            <person name="Sebaihia M."/>
            <person name="Thomson N.R."/>
            <person name="Chaudhuri R."/>
            <person name="Henderson I.R."/>
            <person name="Sperandio V."/>
            <person name="Ravel J."/>
        </authorList>
    </citation>
    <scope>NUCLEOTIDE SEQUENCE [LARGE SCALE GENOMIC DNA]</scope>
    <source>
        <strain>HS</strain>
    </source>
</reference>
<feature type="chain" id="PRO_1000057394" description="2-dehydro-3-deoxyphosphooctonate aldolase">
    <location>
        <begin position="1"/>
        <end position="284"/>
    </location>
</feature>
<name>KDSA_ECOHS</name>
<accession>A7ZZF1</accession>
<evidence type="ECO:0000255" key="1">
    <source>
        <dbReference type="HAMAP-Rule" id="MF_00056"/>
    </source>
</evidence>
<protein>
    <recommendedName>
        <fullName evidence="1">2-dehydro-3-deoxyphosphooctonate aldolase</fullName>
        <ecNumber evidence="1">2.5.1.55</ecNumber>
    </recommendedName>
    <alternativeName>
        <fullName evidence="1">3-deoxy-D-manno-octulosonic acid 8-phosphate synthase</fullName>
    </alternativeName>
    <alternativeName>
        <fullName evidence="1">KDO-8-phosphate synthase</fullName>
        <shortName evidence="1">KDO 8-P synthase</shortName>
        <shortName evidence="1">KDOPS</shortName>
    </alternativeName>
    <alternativeName>
        <fullName evidence="1">Phospho-2-dehydro-3-deoxyoctonate aldolase</fullName>
    </alternativeName>
</protein>
<dbReference type="EC" id="2.5.1.55" evidence="1"/>
<dbReference type="EMBL" id="CP000802">
    <property type="protein sequence ID" value="ABV05655.1"/>
    <property type="molecule type" value="Genomic_DNA"/>
</dbReference>
<dbReference type="RefSeq" id="WP_000811065.1">
    <property type="nucleotide sequence ID" value="NC_009800.1"/>
</dbReference>
<dbReference type="SMR" id="A7ZZF1"/>
<dbReference type="GeneID" id="75203328"/>
<dbReference type="KEGG" id="ecx:EcHS_A1320"/>
<dbReference type="HOGENOM" id="CLU_036666_0_0_6"/>
<dbReference type="UniPathway" id="UPA00030"/>
<dbReference type="UniPathway" id="UPA00357">
    <property type="reaction ID" value="UER00474"/>
</dbReference>
<dbReference type="GO" id="GO:0005737">
    <property type="term" value="C:cytoplasm"/>
    <property type="evidence" value="ECO:0007669"/>
    <property type="project" value="UniProtKB-SubCell"/>
</dbReference>
<dbReference type="GO" id="GO:0008676">
    <property type="term" value="F:3-deoxy-8-phosphooctulonate synthase activity"/>
    <property type="evidence" value="ECO:0007669"/>
    <property type="project" value="UniProtKB-UniRule"/>
</dbReference>
<dbReference type="GO" id="GO:0019294">
    <property type="term" value="P:keto-3-deoxy-D-manno-octulosonic acid biosynthetic process"/>
    <property type="evidence" value="ECO:0007669"/>
    <property type="project" value="UniProtKB-UniRule"/>
</dbReference>
<dbReference type="FunFam" id="3.20.20.70:FF:000058">
    <property type="entry name" value="2-dehydro-3-deoxyphosphooctonate aldolase"/>
    <property type="match status" value="1"/>
</dbReference>
<dbReference type="Gene3D" id="3.20.20.70">
    <property type="entry name" value="Aldolase class I"/>
    <property type="match status" value="1"/>
</dbReference>
<dbReference type="HAMAP" id="MF_00056">
    <property type="entry name" value="KDO8P_synth"/>
    <property type="match status" value="1"/>
</dbReference>
<dbReference type="InterPro" id="IPR013785">
    <property type="entry name" value="Aldolase_TIM"/>
</dbReference>
<dbReference type="InterPro" id="IPR006218">
    <property type="entry name" value="DAHP1/KDSA"/>
</dbReference>
<dbReference type="InterPro" id="IPR006269">
    <property type="entry name" value="KDO8P_synthase"/>
</dbReference>
<dbReference type="NCBIfam" id="TIGR01362">
    <property type="entry name" value="KDO8P_synth"/>
    <property type="match status" value="1"/>
</dbReference>
<dbReference type="NCBIfam" id="NF003543">
    <property type="entry name" value="PRK05198.1"/>
    <property type="match status" value="1"/>
</dbReference>
<dbReference type="NCBIfam" id="NF009109">
    <property type="entry name" value="PRK12457.1"/>
    <property type="match status" value="1"/>
</dbReference>
<dbReference type="PANTHER" id="PTHR21057">
    <property type="entry name" value="PHOSPHO-2-DEHYDRO-3-DEOXYHEPTONATE ALDOLASE"/>
    <property type="match status" value="1"/>
</dbReference>
<dbReference type="Pfam" id="PF00793">
    <property type="entry name" value="DAHP_synth_1"/>
    <property type="match status" value="1"/>
</dbReference>
<dbReference type="SUPFAM" id="SSF51569">
    <property type="entry name" value="Aldolase"/>
    <property type="match status" value="1"/>
</dbReference>
<comment type="catalytic activity">
    <reaction evidence="1">
        <text>D-arabinose 5-phosphate + phosphoenolpyruvate + H2O = 3-deoxy-alpha-D-manno-2-octulosonate-8-phosphate + phosphate</text>
        <dbReference type="Rhea" id="RHEA:14053"/>
        <dbReference type="ChEBI" id="CHEBI:15377"/>
        <dbReference type="ChEBI" id="CHEBI:43474"/>
        <dbReference type="ChEBI" id="CHEBI:57693"/>
        <dbReference type="ChEBI" id="CHEBI:58702"/>
        <dbReference type="ChEBI" id="CHEBI:85985"/>
        <dbReference type="EC" id="2.5.1.55"/>
    </reaction>
</comment>
<comment type="pathway">
    <text evidence="1">Carbohydrate biosynthesis; 3-deoxy-D-manno-octulosonate biosynthesis; 3-deoxy-D-manno-octulosonate from D-ribulose 5-phosphate: step 2/3.</text>
</comment>
<comment type="pathway">
    <text evidence="1">Bacterial outer membrane biogenesis; lipopolysaccharide biosynthesis.</text>
</comment>
<comment type="subcellular location">
    <subcellularLocation>
        <location evidence="1">Cytoplasm</location>
    </subcellularLocation>
</comment>
<comment type="similarity">
    <text evidence="1">Belongs to the KdsA family.</text>
</comment>